<protein>
    <recommendedName>
        <fullName evidence="1">Nucleoside diphosphate kinase</fullName>
        <shortName evidence="1">NDK</shortName>
        <shortName evidence="1">NDP kinase</shortName>
        <ecNumber evidence="1">2.7.4.6</ecNumber>
    </recommendedName>
    <alternativeName>
        <fullName evidence="1">Nucleoside-2-P kinase</fullName>
    </alternativeName>
</protein>
<reference key="1">
    <citation type="submission" date="2006-01" db="EMBL/GenBank/DDBJ databases">
        <title>Complete sequence of Rhodopseudomonas palustris HaA2.</title>
        <authorList>
            <consortium name="US DOE Joint Genome Institute"/>
            <person name="Copeland A."/>
            <person name="Lucas S."/>
            <person name="Lapidus A."/>
            <person name="Barry K."/>
            <person name="Detter J.C."/>
            <person name="Glavina T."/>
            <person name="Hammon N."/>
            <person name="Israni S."/>
            <person name="Pitluck S."/>
            <person name="Chain P."/>
            <person name="Malfatti S."/>
            <person name="Shin M."/>
            <person name="Vergez L."/>
            <person name="Schmutz J."/>
            <person name="Larimer F."/>
            <person name="Land M."/>
            <person name="Hauser L."/>
            <person name="Pelletier D.A."/>
            <person name="Kyrpides N."/>
            <person name="Anderson I."/>
            <person name="Oda Y."/>
            <person name="Harwood C.S."/>
            <person name="Richardson P."/>
        </authorList>
    </citation>
    <scope>NUCLEOTIDE SEQUENCE [LARGE SCALE GENOMIC DNA]</scope>
    <source>
        <strain>HaA2</strain>
    </source>
</reference>
<evidence type="ECO:0000255" key="1">
    <source>
        <dbReference type="HAMAP-Rule" id="MF_00451"/>
    </source>
</evidence>
<gene>
    <name evidence="1" type="primary">ndk</name>
    <name type="ordered locus">RPB_2485</name>
</gene>
<sequence>MAVQRTFSILKPDATERNITGAINALIEKAGLRIVAQKRIHMTRGQAETFYAVHKERPFFGELVDFMTSGPVVVQVLEGEGAIAKYRDVMGATDPSKAADGTIRKLHAKSIGENSVHGSDAPETAAIEIAQFFAGNEIVG</sequence>
<keyword id="KW-0067">ATP-binding</keyword>
<keyword id="KW-0963">Cytoplasm</keyword>
<keyword id="KW-0418">Kinase</keyword>
<keyword id="KW-0460">Magnesium</keyword>
<keyword id="KW-0479">Metal-binding</keyword>
<keyword id="KW-0546">Nucleotide metabolism</keyword>
<keyword id="KW-0547">Nucleotide-binding</keyword>
<keyword id="KW-0597">Phosphoprotein</keyword>
<keyword id="KW-1185">Reference proteome</keyword>
<keyword id="KW-0808">Transferase</keyword>
<comment type="function">
    <text evidence="1">Major role in the synthesis of nucleoside triphosphates other than ATP. The ATP gamma phosphate is transferred to the NDP beta phosphate via a ping-pong mechanism, using a phosphorylated active-site intermediate.</text>
</comment>
<comment type="catalytic activity">
    <reaction evidence="1">
        <text>a 2'-deoxyribonucleoside 5'-diphosphate + ATP = a 2'-deoxyribonucleoside 5'-triphosphate + ADP</text>
        <dbReference type="Rhea" id="RHEA:44640"/>
        <dbReference type="ChEBI" id="CHEBI:30616"/>
        <dbReference type="ChEBI" id="CHEBI:61560"/>
        <dbReference type="ChEBI" id="CHEBI:73316"/>
        <dbReference type="ChEBI" id="CHEBI:456216"/>
        <dbReference type="EC" id="2.7.4.6"/>
    </reaction>
</comment>
<comment type="catalytic activity">
    <reaction evidence="1">
        <text>a ribonucleoside 5'-diphosphate + ATP = a ribonucleoside 5'-triphosphate + ADP</text>
        <dbReference type="Rhea" id="RHEA:18113"/>
        <dbReference type="ChEBI" id="CHEBI:30616"/>
        <dbReference type="ChEBI" id="CHEBI:57930"/>
        <dbReference type="ChEBI" id="CHEBI:61557"/>
        <dbReference type="ChEBI" id="CHEBI:456216"/>
        <dbReference type="EC" id="2.7.4.6"/>
    </reaction>
</comment>
<comment type="cofactor">
    <cofactor evidence="1">
        <name>Mg(2+)</name>
        <dbReference type="ChEBI" id="CHEBI:18420"/>
    </cofactor>
</comment>
<comment type="subunit">
    <text evidence="1">Homotetramer.</text>
</comment>
<comment type="subcellular location">
    <subcellularLocation>
        <location evidence="1">Cytoplasm</location>
    </subcellularLocation>
</comment>
<comment type="similarity">
    <text evidence="1">Belongs to the NDK family.</text>
</comment>
<dbReference type="EC" id="2.7.4.6" evidence="1"/>
<dbReference type="EMBL" id="CP000250">
    <property type="protein sequence ID" value="ABD07190.1"/>
    <property type="molecule type" value="Genomic_DNA"/>
</dbReference>
<dbReference type="RefSeq" id="WP_011441375.1">
    <property type="nucleotide sequence ID" value="NC_007778.1"/>
</dbReference>
<dbReference type="SMR" id="Q2IX70"/>
<dbReference type="STRING" id="316058.RPB_2485"/>
<dbReference type="KEGG" id="rpb:RPB_2485"/>
<dbReference type="eggNOG" id="COG0105">
    <property type="taxonomic scope" value="Bacteria"/>
</dbReference>
<dbReference type="HOGENOM" id="CLU_060216_8_1_5"/>
<dbReference type="OrthoDB" id="9801161at2"/>
<dbReference type="Proteomes" id="UP000008809">
    <property type="component" value="Chromosome"/>
</dbReference>
<dbReference type="GO" id="GO:0005737">
    <property type="term" value="C:cytoplasm"/>
    <property type="evidence" value="ECO:0007669"/>
    <property type="project" value="UniProtKB-SubCell"/>
</dbReference>
<dbReference type="GO" id="GO:0005524">
    <property type="term" value="F:ATP binding"/>
    <property type="evidence" value="ECO:0007669"/>
    <property type="project" value="UniProtKB-UniRule"/>
</dbReference>
<dbReference type="GO" id="GO:0046872">
    <property type="term" value="F:metal ion binding"/>
    <property type="evidence" value="ECO:0007669"/>
    <property type="project" value="UniProtKB-KW"/>
</dbReference>
<dbReference type="GO" id="GO:0004550">
    <property type="term" value="F:nucleoside diphosphate kinase activity"/>
    <property type="evidence" value="ECO:0007669"/>
    <property type="project" value="UniProtKB-UniRule"/>
</dbReference>
<dbReference type="GO" id="GO:0006241">
    <property type="term" value="P:CTP biosynthetic process"/>
    <property type="evidence" value="ECO:0007669"/>
    <property type="project" value="UniProtKB-UniRule"/>
</dbReference>
<dbReference type="GO" id="GO:0006183">
    <property type="term" value="P:GTP biosynthetic process"/>
    <property type="evidence" value="ECO:0007669"/>
    <property type="project" value="UniProtKB-UniRule"/>
</dbReference>
<dbReference type="GO" id="GO:0006228">
    <property type="term" value="P:UTP biosynthetic process"/>
    <property type="evidence" value="ECO:0007669"/>
    <property type="project" value="UniProtKB-UniRule"/>
</dbReference>
<dbReference type="CDD" id="cd04413">
    <property type="entry name" value="NDPk_I"/>
    <property type="match status" value="1"/>
</dbReference>
<dbReference type="Gene3D" id="3.30.70.141">
    <property type="entry name" value="Nucleoside diphosphate kinase-like domain"/>
    <property type="match status" value="1"/>
</dbReference>
<dbReference type="HAMAP" id="MF_00451">
    <property type="entry name" value="NDP_kinase"/>
    <property type="match status" value="1"/>
</dbReference>
<dbReference type="InterPro" id="IPR034907">
    <property type="entry name" value="NDK-like_dom"/>
</dbReference>
<dbReference type="InterPro" id="IPR036850">
    <property type="entry name" value="NDK-like_dom_sf"/>
</dbReference>
<dbReference type="InterPro" id="IPR001564">
    <property type="entry name" value="Nucleoside_diP_kinase"/>
</dbReference>
<dbReference type="InterPro" id="IPR023005">
    <property type="entry name" value="Nucleoside_diP_kinase_AS"/>
</dbReference>
<dbReference type="NCBIfam" id="NF001908">
    <property type="entry name" value="PRK00668.1"/>
    <property type="match status" value="1"/>
</dbReference>
<dbReference type="PANTHER" id="PTHR46161">
    <property type="entry name" value="NUCLEOSIDE DIPHOSPHATE KINASE"/>
    <property type="match status" value="1"/>
</dbReference>
<dbReference type="PANTHER" id="PTHR46161:SF3">
    <property type="entry name" value="NUCLEOSIDE DIPHOSPHATE KINASE DDB_G0292928-RELATED"/>
    <property type="match status" value="1"/>
</dbReference>
<dbReference type="Pfam" id="PF00334">
    <property type="entry name" value="NDK"/>
    <property type="match status" value="1"/>
</dbReference>
<dbReference type="PRINTS" id="PR01243">
    <property type="entry name" value="NUCDPKINASE"/>
</dbReference>
<dbReference type="SMART" id="SM00562">
    <property type="entry name" value="NDK"/>
    <property type="match status" value="1"/>
</dbReference>
<dbReference type="SUPFAM" id="SSF54919">
    <property type="entry name" value="Nucleoside diphosphate kinase, NDK"/>
    <property type="match status" value="1"/>
</dbReference>
<dbReference type="PROSITE" id="PS00469">
    <property type="entry name" value="NDPK"/>
    <property type="match status" value="1"/>
</dbReference>
<dbReference type="PROSITE" id="PS51374">
    <property type="entry name" value="NDPK_LIKE"/>
    <property type="match status" value="1"/>
</dbReference>
<feature type="chain" id="PRO_0000242512" description="Nucleoside diphosphate kinase">
    <location>
        <begin position="1"/>
        <end position="140"/>
    </location>
</feature>
<feature type="active site" description="Pros-phosphohistidine intermediate" evidence="1">
    <location>
        <position position="117"/>
    </location>
</feature>
<feature type="binding site" evidence="1">
    <location>
        <position position="11"/>
    </location>
    <ligand>
        <name>ATP</name>
        <dbReference type="ChEBI" id="CHEBI:30616"/>
    </ligand>
</feature>
<feature type="binding site" evidence="1">
    <location>
        <position position="59"/>
    </location>
    <ligand>
        <name>ATP</name>
        <dbReference type="ChEBI" id="CHEBI:30616"/>
    </ligand>
</feature>
<feature type="binding site" evidence="1">
    <location>
        <position position="87"/>
    </location>
    <ligand>
        <name>ATP</name>
        <dbReference type="ChEBI" id="CHEBI:30616"/>
    </ligand>
</feature>
<feature type="binding site" evidence="1">
    <location>
        <position position="93"/>
    </location>
    <ligand>
        <name>ATP</name>
        <dbReference type="ChEBI" id="CHEBI:30616"/>
    </ligand>
</feature>
<feature type="binding site" evidence="1">
    <location>
        <position position="104"/>
    </location>
    <ligand>
        <name>ATP</name>
        <dbReference type="ChEBI" id="CHEBI:30616"/>
    </ligand>
</feature>
<feature type="binding site" evidence="1">
    <location>
        <position position="114"/>
    </location>
    <ligand>
        <name>ATP</name>
        <dbReference type="ChEBI" id="CHEBI:30616"/>
    </ligand>
</feature>
<organism>
    <name type="scientific">Rhodopseudomonas palustris (strain HaA2)</name>
    <dbReference type="NCBI Taxonomy" id="316058"/>
    <lineage>
        <taxon>Bacteria</taxon>
        <taxon>Pseudomonadati</taxon>
        <taxon>Pseudomonadota</taxon>
        <taxon>Alphaproteobacteria</taxon>
        <taxon>Hyphomicrobiales</taxon>
        <taxon>Nitrobacteraceae</taxon>
        <taxon>Rhodopseudomonas</taxon>
    </lineage>
</organism>
<name>NDK_RHOP2</name>
<accession>Q2IX70</accession>
<proteinExistence type="inferred from homology"/>